<evidence type="ECO:0000250" key="1"/>
<evidence type="ECO:0000255" key="2"/>
<evidence type="ECO:0000305" key="3"/>
<sequence length="840" mass="96893">MNQEVKNKIFSILKITFATALFIFVVITLYRELSGINFKDTLVEFSKINRMSLVLLFIGGGASLVILSMYDVILSRALKMDISLGKVLRVSYIINALNAIVGFGGFIGAGVRAMVYKNYTHDKKKLVHFISLILISMLTGLSLLSLLIVFHVFDASLILDKITWVRWVLYVVSFFLPLFIIYSMVRPPDKNNRFVGLYCTLVSCVEWLAAAVVLYFCGVIVDAHVSFMSFIAIFIIAALSGLVSFIPGGFGAFDLVVLLGFKTLGVPEEKVLLMLLLYRFAYYFVPVIIALILSSFEFGTSAKKYIEGSKYFIPAKDVTSFLMSYQKDIIAKIPSLSLAILVFFTSMIFFVNNLTIVYDALYDGNHLTYYILLAIHTSACLLLLLNVVGIYKQSRRAIIFAMISILLITVATFFTYASYILITWLAIIFVLLIVAFRRARRLKRPVRMRNIVAMLLFSLFILYVNHIFIAGTLYALDIYTIEMHTSVLRYYFWLTILIIAIIIGMIAWLFDYQFSKVRISSKIEDCEEIINQYGGNYLSHLIYSGDKQFFTNENKTAFLMYRYKASSLVVLGDPLGDENAFDELLEAFYNYAEYLGYDVIFYQVTDQHMPLYHNFGNQFFKLGEEAIIDLTQFSTSGKKRRGFRATLNKFDELNISFEIIEPPFSTEFINELQHVSDLWLDNRQEMHFSVGQFNEEYLSKAPIGVMRNEENEVIAFCSLMPTYFNDAISVDLIRWLPELDLPLMDGLYLHMLLWSKEQGYTKFNMGMATLSNVGQLHYSYLRERLAGRVFEHFNGLYRFQGLRRYKSKYNPNWEPRFLVYRKDNSLWESLSKVMRVIRHK</sequence>
<name>MPRF_STAAS</name>
<protein>
    <recommendedName>
        <fullName>Phosphatidylglycerol lysyltransferase</fullName>
        <ecNumber>2.3.2.3</ecNumber>
    </recommendedName>
    <alternativeName>
        <fullName>Lysylphosphatidylglycerol synthase</fullName>
        <shortName>LPG synthase</shortName>
    </alternativeName>
    <alternativeName>
        <fullName>Multiple peptide resistance factor</fullName>
    </alternativeName>
</protein>
<feature type="chain" id="PRO_0000096563" description="Phosphatidylglycerol lysyltransferase">
    <location>
        <begin position="1"/>
        <end position="840"/>
    </location>
</feature>
<feature type="topological domain" description="Cytoplasmic" evidence="2">
    <location>
        <begin position="1"/>
        <end position="8"/>
    </location>
</feature>
<feature type="transmembrane region" description="Helical" evidence="2">
    <location>
        <begin position="9"/>
        <end position="29"/>
    </location>
</feature>
<feature type="topological domain" description="Extracellular" evidence="2">
    <location>
        <begin position="30"/>
        <end position="52"/>
    </location>
</feature>
<feature type="transmembrane region" description="Helical" evidence="2">
    <location>
        <begin position="53"/>
        <end position="73"/>
    </location>
</feature>
<feature type="topological domain" description="Cytoplasmic" evidence="2">
    <location>
        <begin position="74"/>
        <end position="89"/>
    </location>
</feature>
<feature type="transmembrane region" description="Helical" evidence="2">
    <location>
        <begin position="90"/>
        <end position="110"/>
    </location>
</feature>
<feature type="topological domain" description="Extracellular" evidence="2">
    <location>
        <begin position="111"/>
        <end position="128"/>
    </location>
</feature>
<feature type="transmembrane region" description="Helical" evidence="2">
    <location>
        <begin position="129"/>
        <end position="149"/>
    </location>
</feature>
<feature type="topological domain" description="Cytoplasmic" evidence="2">
    <location>
        <begin position="150"/>
        <end position="161"/>
    </location>
</feature>
<feature type="transmembrane region" description="Helical" evidence="2">
    <location>
        <begin position="162"/>
        <end position="182"/>
    </location>
</feature>
<feature type="topological domain" description="Extracellular" evidence="2">
    <location>
        <begin position="183"/>
        <end position="200"/>
    </location>
</feature>
<feature type="transmembrane region" description="Helical" evidence="2">
    <location>
        <begin position="201"/>
        <end position="221"/>
    </location>
</feature>
<feature type="topological domain" description="Cytoplasmic" evidence="2">
    <location>
        <begin position="222"/>
        <end position="229"/>
    </location>
</feature>
<feature type="transmembrane region" description="Helical" evidence="2">
    <location>
        <begin position="230"/>
        <end position="250"/>
    </location>
</feature>
<feature type="topological domain" description="Extracellular" evidence="2">
    <location>
        <begin position="251"/>
        <end position="271"/>
    </location>
</feature>
<feature type="transmembrane region" description="Helical" evidence="2">
    <location>
        <begin position="272"/>
        <end position="292"/>
    </location>
</feature>
<feature type="topological domain" description="Cytoplasmic" evidence="2">
    <location>
        <begin position="293"/>
        <end position="337"/>
    </location>
</feature>
<feature type="transmembrane region" description="Helical" evidence="2">
    <location>
        <begin position="338"/>
        <end position="358"/>
    </location>
</feature>
<feature type="topological domain" description="Extracellular" evidence="2">
    <location>
        <begin position="359"/>
        <end position="369"/>
    </location>
</feature>
<feature type="transmembrane region" description="Helical" evidence="2">
    <location>
        <begin position="370"/>
        <end position="390"/>
    </location>
</feature>
<feature type="topological domain" description="Cytoplasmic" evidence="2">
    <location>
        <begin position="391"/>
        <end position="394"/>
    </location>
</feature>
<feature type="transmembrane region" description="Helical" evidence="2">
    <location>
        <begin position="395"/>
        <end position="415"/>
    </location>
</feature>
<feature type="transmembrane region" description="Helical" evidence="2">
    <location>
        <begin position="416"/>
        <end position="436"/>
    </location>
</feature>
<feature type="topological domain" description="Cytoplasmic" evidence="2">
    <location>
        <begin position="437"/>
        <end position="450"/>
    </location>
</feature>
<feature type="transmembrane region" description="Helical" evidence="2">
    <location>
        <begin position="451"/>
        <end position="471"/>
    </location>
</feature>
<feature type="topological domain" description="Extracellular" evidence="2">
    <location>
        <begin position="472"/>
        <end position="489"/>
    </location>
</feature>
<feature type="transmembrane region" description="Helical" evidence="2">
    <location>
        <begin position="490"/>
        <end position="510"/>
    </location>
</feature>
<feature type="topological domain" description="Cytoplasmic" evidence="2">
    <location>
        <begin position="511"/>
        <end position="840"/>
    </location>
</feature>
<gene>
    <name type="primary">mprF</name>
    <name type="ordered locus">SAS1300</name>
</gene>
<organism>
    <name type="scientific">Staphylococcus aureus (strain MSSA476)</name>
    <dbReference type="NCBI Taxonomy" id="282459"/>
    <lineage>
        <taxon>Bacteria</taxon>
        <taxon>Bacillati</taxon>
        <taxon>Bacillota</taxon>
        <taxon>Bacilli</taxon>
        <taxon>Bacillales</taxon>
        <taxon>Staphylococcaceae</taxon>
        <taxon>Staphylococcus</taxon>
    </lineage>
</organism>
<comment type="function">
    <text evidence="1">Catalyzes the transfer of a lysyl group from L-lysyl-tRNA(Lys) to membrane-bound phosphatidylglycerol (PG), which produces lysylphosphatidylglycerol (LPG), a major component of the bacterial membrane with a positive net charge. LPG synthesis contributes to bacterial virulence as it is involved in the resistance mechanism against cationic antimicrobial peptides (CAMP) produces by the host's immune system (defensins, cathelicidins) and by the competing microorganisms (bacteriocins). In fact, the modification of anionic phosphatidylglycerol with positively charged L-lysine results in repulsion of the peptides (By similarity).</text>
</comment>
<comment type="catalytic activity">
    <reaction>
        <text>L-lysyl-tRNA(Lys) + a 1,2-diacyl-sn-glycero-3-phospho-(1'-sn-glycerol) = a 1,2-diacyl-sn-glycero-3-phospho-1'-(3'-O-L-lysyl)-sn-glycerol + tRNA(Lys)</text>
        <dbReference type="Rhea" id="RHEA:10668"/>
        <dbReference type="Rhea" id="RHEA-COMP:9696"/>
        <dbReference type="Rhea" id="RHEA-COMP:9697"/>
        <dbReference type="ChEBI" id="CHEBI:64716"/>
        <dbReference type="ChEBI" id="CHEBI:75792"/>
        <dbReference type="ChEBI" id="CHEBI:78442"/>
        <dbReference type="ChEBI" id="CHEBI:78529"/>
        <dbReference type="EC" id="2.3.2.3"/>
    </reaction>
</comment>
<comment type="subcellular location">
    <subcellularLocation>
        <location>Cell membrane</location>
        <topology>Multi-pass membrane protein</topology>
    </subcellularLocation>
</comment>
<comment type="similarity">
    <text evidence="3">Belongs to the LPG synthase family.</text>
</comment>
<dbReference type="EC" id="2.3.2.3"/>
<dbReference type="EMBL" id="BX571857">
    <property type="protein sequence ID" value="CAG43077.1"/>
    <property type="molecule type" value="Genomic_DNA"/>
</dbReference>
<dbReference type="RefSeq" id="WP_001071152.1">
    <property type="nucleotide sequence ID" value="NC_002953.3"/>
</dbReference>
<dbReference type="SMR" id="Q6G9J9"/>
<dbReference type="KEGG" id="sas:SAS1300"/>
<dbReference type="HOGENOM" id="CLU_008255_7_1_9"/>
<dbReference type="GO" id="GO:0005886">
    <property type="term" value="C:plasma membrane"/>
    <property type="evidence" value="ECO:0007669"/>
    <property type="project" value="UniProtKB-SubCell"/>
</dbReference>
<dbReference type="GO" id="GO:0050071">
    <property type="term" value="F:phosphatidylglycerol lysyltransferase activity"/>
    <property type="evidence" value="ECO:0007669"/>
    <property type="project" value="UniProtKB-EC"/>
</dbReference>
<dbReference type="GO" id="GO:0006629">
    <property type="term" value="P:lipid metabolic process"/>
    <property type="evidence" value="ECO:0007669"/>
    <property type="project" value="UniProtKB-KW"/>
</dbReference>
<dbReference type="GO" id="GO:0055091">
    <property type="term" value="P:phospholipid homeostasis"/>
    <property type="evidence" value="ECO:0007669"/>
    <property type="project" value="TreeGrafter"/>
</dbReference>
<dbReference type="GO" id="GO:0046677">
    <property type="term" value="P:response to antibiotic"/>
    <property type="evidence" value="ECO:0007669"/>
    <property type="project" value="UniProtKB-KW"/>
</dbReference>
<dbReference type="InterPro" id="IPR016181">
    <property type="entry name" value="Acyl_CoA_acyltransferase"/>
</dbReference>
<dbReference type="InterPro" id="IPR022791">
    <property type="entry name" value="L-PG_synthase/AglD"/>
</dbReference>
<dbReference type="InterPro" id="IPR024320">
    <property type="entry name" value="LPG_synthase_C"/>
</dbReference>
<dbReference type="InterPro" id="IPR051211">
    <property type="entry name" value="PG_lysyltransferase"/>
</dbReference>
<dbReference type="NCBIfam" id="NF033480">
    <property type="entry name" value="bifunc_MprF"/>
    <property type="match status" value="1"/>
</dbReference>
<dbReference type="NCBIfam" id="TIGR00374">
    <property type="entry name" value="flippase-like domain"/>
    <property type="match status" value="1"/>
</dbReference>
<dbReference type="PANTHER" id="PTHR34697">
    <property type="entry name" value="PHOSPHATIDYLGLYCEROL LYSYLTRANSFERASE"/>
    <property type="match status" value="1"/>
</dbReference>
<dbReference type="PANTHER" id="PTHR34697:SF2">
    <property type="entry name" value="PHOSPHATIDYLGLYCEROL LYSYLTRANSFERASE"/>
    <property type="match status" value="1"/>
</dbReference>
<dbReference type="Pfam" id="PF09924">
    <property type="entry name" value="LPG_synthase_C"/>
    <property type="match status" value="1"/>
</dbReference>
<dbReference type="Pfam" id="PF03706">
    <property type="entry name" value="LPG_synthase_TM"/>
    <property type="match status" value="1"/>
</dbReference>
<dbReference type="SUPFAM" id="SSF55729">
    <property type="entry name" value="Acyl-CoA N-acyltransferases (Nat)"/>
    <property type="match status" value="1"/>
</dbReference>
<keyword id="KW-0046">Antibiotic resistance</keyword>
<keyword id="KW-1003">Cell membrane</keyword>
<keyword id="KW-0443">Lipid metabolism</keyword>
<keyword id="KW-0472">Membrane</keyword>
<keyword id="KW-0808">Transferase</keyword>
<keyword id="KW-0812">Transmembrane</keyword>
<keyword id="KW-1133">Transmembrane helix</keyword>
<keyword id="KW-0843">Virulence</keyword>
<accession>Q6G9J9</accession>
<proteinExistence type="inferred from homology"/>
<reference key="1">
    <citation type="journal article" date="2004" name="Proc. Natl. Acad. Sci. U.S.A.">
        <title>Complete genomes of two clinical Staphylococcus aureus strains: evidence for the rapid evolution of virulence and drug resistance.</title>
        <authorList>
            <person name="Holden M.T.G."/>
            <person name="Feil E.J."/>
            <person name="Lindsay J.A."/>
            <person name="Peacock S.J."/>
            <person name="Day N.P.J."/>
            <person name="Enright M.C."/>
            <person name="Foster T.J."/>
            <person name="Moore C.E."/>
            <person name="Hurst L."/>
            <person name="Atkin R."/>
            <person name="Barron A."/>
            <person name="Bason N."/>
            <person name="Bentley S.D."/>
            <person name="Chillingworth C."/>
            <person name="Chillingworth T."/>
            <person name="Churcher C."/>
            <person name="Clark L."/>
            <person name="Corton C."/>
            <person name="Cronin A."/>
            <person name="Doggett J."/>
            <person name="Dowd L."/>
            <person name="Feltwell T."/>
            <person name="Hance Z."/>
            <person name="Harris B."/>
            <person name="Hauser H."/>
            <person name="Holroyd S."/>
            <person name="Jagels K."/>
            <person name="James K.D."/>
            <person name="Lennard N."/>
            <person name="Line A."/>
            <person name="Mayes R."/>
            <person name="Moule S."/>
            <person name="Mungall K."/>
            <person name="Ormond D."/>
            <person name="Quail M.A."/>
            <person name="Rabbinowitsch E."/>
            <person name="Rutherford K.M."/>
            <person name="Sanders M."/>
            <person name="Sharp S."/>
            <person name="Simmonds M."/>
            <person name="Stevens K."/>
            <person name="Whitehead S."/>
            <person name="Barrell B.G."/>
            <person name="Spratt B.G."/>
            <person name="Parkhill J."/>
        </authorList>
    </citation>
    <scope>NUCLEOTIDE SEQUENCE [LARGE SCALE GENOMIC DNA]</scope>
    <source>
        <strain>MSSA476</strain>
    </source>
</reference>